<proteinExistence type="evidence at protein level"/>
<protein>
    <recommendedName>
        <fullName evidence="7">Periaxin</fullName>
    </recommendedName>
</protein>
<organism>
    <name type="scientific">Bos taurus</name>
    <name type="common">Bovine</name>
    <dbReference type="NCBI Taxonomy" id="9913"/>
    <lineage>
        <taxon>Eukaryota</taxon>
        <taxon>Metazoa</taxon>
        <taxon>Chordata</taxon>
        <taxon>Craniata</taxon>
        <taxon>Vertebrata</taxon>
        <taxon>Euteleostomi</taxon>
        <taxon>Mammalia</taxon>
        <taxon>Eutheria</taxon>
        <taxon>Laurasiatheria</taxon>
        <taxon>Artiodactyla</taxon>
        <taxon>Ruminantia</taxon>
        <taxon>Pecora</taxon>
        <taxon>Bovidae</taxon>
        <taxon>Bovinae</taxon>
        <taxon>Bos</taxon>
    </lineage>
</organism>
<gene>
    <name type="primary">PRX</name>
</gene>
<dbReference type="EMBL" id="DAAA02047080">
    <property type="status" value="NOT_ANNOTATED_CDS"/>
    <property type="molecule type" value="Genomic_DNA"/>
</dbReference>
<dbReference type="EMBL" id="DV920320">
    <property type="status" value="NOT_ANNOTATED_CDS"/>
    <property type="molecule type" value="mRNA"/>
</dbReference>
<dbReference type="RefSeq" id="XP_003587302.2">
    <property type="nucleotide sequence ID" value="XM_003587254.6"/>
</dbReference>
<dbReference type="RefSeq" id="XP_015322984.1">
    <property type="nucleotide sequence ID" value="XM_015467498.1"/>
</dbReference>
<dbReference type="SMR" id="E1BM58"/>
<dbReference type="CORUM" id="E1BM58"/>
<dbReference type="FunCoup" id="E1BM58">
    <property type="interactions" value="94"/>
</dbReference>
<dbReference type="STRING" id="9913.ENSBTAP00000010183"/>
<dbReference type="PaxDb" id="9913-ENSBTAP00000010183"/>
<dbReference type="Ensembl" id="ENSBTAT00000010183.6">
    <property type="protein sequence ID" value="ENSBTAP00000010183.5"/>
    <property type="gene ID" value="ENSBTAG00000017333.6"/>
</dbReference>
<dbReference type="GeneID" id="520296"/>
<dbReference type="KEGG" id="bta:520296"/>
<dbReference type="CTD" id="57716"/>
<dbReference type="VEuPathDB" id="HostDB:ENSBTAG00000017333"/>
<dbReference type="VGNC" id="VGNC:33430">
    <property type="gene designation" value="PRX"/>
</dbReference>
<dbReference type="eggNOG" id="ENOG502QS7Y">
    <property type="taxonomic scope" value="Eukaryota"/>
</dbReference>
<dbReference type="GeneTree" id="ENSGT00940000160366"/>
<dbReference type="HOGENOM" id="CLU_252008_0_0_1"/>
<dbReference type="InParanoid" id="E1BM58"/>
<dbReference type="OMA" id="EMKLPRM"/>
<dbReference type="OrthoDB" id="447516at2759"/>
<dbReference type="TreeFam" id="TF350595"/>
<dbReference type="CD-CODE" id="D7FE2080">
    <property type="entry name" value="Nucleolus"/>
</dbReference>
<dbReference type="Proteomes" id="UP000009136">
    <property type="component" value="Chromosome 18"/>
</dbReference>
<dbReference type="Bgee" id="ENSBTAG00000017333">
    <property type="expression patterns" value="Expressed in pigment epithelium of eye and 84 other cell types or tissues"/>
</dbReference>
<dbReference type="GO" id="GO:0005912">
    <property type="term" value="C:adherens junction"/>
    <property type="evidence" value="ECO:0007669"/>
    <property type="project" value="UniProtKB-SubCell"/>
</dbReference>
<dbReference type="GO" id="GO:0005737">
    <property type="term" value="C:cytoplasm"/>
    <property type="evidence" value="ECO:0000318"/>
    <property type="project" value="GO_Central"/>
</dbReference>
<dbReference type="GO" id="GO:0005634">
    <property type="term" value="C:nucleus"/>
    <property type="evidence" value="ECO:0000318"/>
    <property type="project" value="GO_Central"/>
</dbReference>
<dbReference type="GO" id="GO:0005886">
    <property type="term" value="C:plasma membrane"/>
    <property type="evidence" value="ECO:0007669"/>
    <property type="project" value="UniProtKB-SubCell"/>
</dbReference>
<dbReference type="GO" id="GO:0032287">
    <property type="term" value="P:peripheral nervous system myelin maintenance"/>
    <property type="evidence" value="ECO:0000318"/>
    <property type="project" value="GO_Central"/>
</dbReference>
<dbReference type="GO" id="GO:0043484">
    <property type="term" value="P:regulation of RNA splicing"/>
    <property type="evidence" value="ECO:0000318"/>
    <property type="project" value="GO_Central"/>
</dbReference>
<dbReference type="CDD" id="cd00136">
    <property type="entry name" value="PDZ_canonical"/>
    <property type="match status" value="1"/>
</dbReference>
<dbReference type="FunFam" id="2.30.42.10:FF:000149">
    <property type="entry name" value="Periaxin"/>
    <property type="match status" value="1"/>
</dbReference>
<dbReference type="Gene3D" id="2.30.42.10">
    <property type="match status" value="1"/>
</dbReference>
<dbReference type="InterPro" id="IPR052082">
    <property type="entry name" value="Myelin_sheath_structural"/>
</dbReference>
<dbReference type="InterPro" id="IPR001478">
    <property type="entry name" value="PDZ"/>
</dbReference>
<dbReference type="InterPro" id="IPR036034">
    <property type="entry name" value="PDZ_sf"/>
</dbReference>
<dbReference type="PANTHER" id="PTHR23348:SF42">
    <property type="entry name" value="PERIAXIN"/>
    <property type="match status" value="1"/>
</dbReference>
<dbReference type="PANTHER" id="PTHR23348">
    <property type="entry name" value="PERIAXIN/AHNAK"/>
    <property type="match status" value="1"/>
</dbReference>
<dbReference type="SMART" id="SM00228">
    <property type="entry name" value="PDZ"/>
    <property type="match status" value="1"/>
</dbReference>
<dbReference type="SUPFAM" id="SSF50156">
    <property type="entry name" value="PDZ domain-like"/>
    <property type="match status" value="1"/>
</dbReference>
<dbReference type="PROSITE" id="PS50106">
    <property type="entry name" value="PDZ"/>
    <property type="match status" value="1"/>
</dbReference>
<comment type="function">
    <text evidence="1">Scaffolding protein that functions as part of a dystroglycan complex in Schwann cells, and as part of EZR and AHNAK-containing complexes in eye lens fiber cells. Required for the maintenance of the peripheral myelin sheath that is essential for normal transmission of nerve impulses and normal perception of sensory stimuli. Required for normal transport of MBP mRNA from the perinuclear to the paranodal regions. Required for normal remyelination after nerve injury. Required for normal elongation of Schwann cells and normal length of the internodes between the nodes of Ranvier. The demyelinated nodes of Ranvier permit saltatory transmission of nerve impulses; shorter internodes cause slower transmission of nerve impulses. Required for the formation of appositions between the abaxonal surface of the myelin sheath and the Schwann cell plasma membrane; the Schwann cell cytoplasm is restricted to regions between these appositions. Required for the formation of Cajal bands and of Schmidt-Lanterman incisures that correspond to short, cytoplasm-filled regions on myelinated nerves. Recruits DRP2 to the Schwann cell plasma membrane. Required for normal protein composition of the eye lens fiber cell plasma membrane and normal eye lens fiber cell morphology.</text>
</comment>
<comment type="subunit">
    <text evidence="1 2 3">Homodimer (via PDZ domain) (By similarity). Interacts with SCN10A. Found in a complex with SCN10A (By similarity). Interacts with DRP2. Identified in a dystroglycan complex that contains at least PRX, DRP2, UTRN, DMD and DAG1 (By similarity). Detected in a complex composed of at least EZR, AHNAK, PPL and PRX (PubMed:14625392). Identified in a complex with EZR, AHNAK, BFSP1, BFSP2, ANK2, PLEC, VIM and spectrin (By similarity).</text>
</comment>
<comment type="subcellular location">
    <subcellularLocation>
        <location evidence="2">Nucleus</location>
    </subcellularLocation>
    <subcellularLocation>
        <location evidence="2">Cytoplasm</location>
    </subcellularLocation>
    <subcellularLocation>
        <location evidence="2">Cell membrane</location>
        <topology evidence="2">Peripheral membrane protein</topology>
        <orientation evidence="2">Cytoplasmic side</orientation>
    </subcellularLocation>
    <subcellularLocation>
        <location evidence="8">Cell junction</location>
        <location evidence="8">Adherens junction</location>
    </subcellularLocation>
    <subcellularLocation>
        <location evidence="1">Cell junction</location>
    </subcellularLocation>
    <text evidence="1 2">Detected in the Schwann cell nucleus prior to the onset of myelination (By similarity). Detected in Schwann cells at periaxonal myelin membranes (By similarity). Associated with the cell membrane during myelination (By similarity). Colocalizes with ACTB at tricellular junctions between eye lens fiber cells (By similarity).</text>
</comment>
<comment type="tissue specificity">
    <text evidence="6">Detected in eye lens (at protein level).</text>
</comment>
<comment type="domain">
    <text evidence="7">Has a remarkable domain of repetitive pentameric units sometimes followed by a tripeptide spacer, it may separate two functional basic and acidic domains.</text>
</comment>
<comment type="domain">
    <text evidence="2">The Arg/Lys-rich basic domain functions as a tripartite nuclear localization signal.</text>
</comment>
<comment type="domain">
    <text evidence="1 3">The PDZ domain contains the signal for export from the nucleus (By similarity). The N-terminal region including the PDZ domain is required for the formation of Cajal bands on myelinated nerves (By similarity).</text>
</comment>
<comment type="similarity">
    <text evidence="7">Belongs to the periaxin family.</text>
</comment>
<feature type="chain" id="PRO_0000434898" description="Periaxin">
    <location>
        <begin position="1"/>
        <end position="1349"/>
    </location>
</feature>
<feature type="domain" description="PDZ" evidence="4">
    <location>
        <begin position="16"/>
        <end position="99"/>
    </location>
</feature>
<feature type="repeat" description="1" evidence="7">
    <location>
        <begin position="402"/>
        <end position="406"/>
    </location>
</feature>
<feature type="repeat" description="2" evidence="7">
    <location>
        <begin position="410"/>
        <end position="414"/>
    </location>
</feature>
<feature type="repeat" description="3" evidence="7">
    <location>
        <begin position="418"/>
        <end position="422"/>
    </location>
</feature>
<feature type="repeat" description="4" evidence="7">
    <location>
        <begin position="426"/>
        <end position="430"/>
    </location>
</feature>
<feature type="repeat" description="5" evidence="7">
    <location>
        <begin position="431"/>
        <end position="435"/>
    </location>
</feature>
<feature type="repeat" description="6" evidence="7">
    <location>
        <begin position="436"/>
        <end position="440"/>
    </location>
</feature>
<feature type="repeat" description="7" evidence="7">
    <location>
        <begin position="444"/>
        <end position="448"/>
    </location>
</feature>
<feature type="repeat" description="8" evidence="7">
    <location>
        <begin position="452"/>
        <end position="456"/>
    </location>
</feature>
<feature type="repeat" description="9" evidence="7">
    <location>
        <begin position="457"/>
        <end position="461"/>
    </location>
</feature>
<feature type="repeat" description="10" evidence="7">
    <location>
        <begin position="462"/>
        <end position="466"/>
    </location>
</feature>
<feature type="repeat" description="11" evidence="7">
    <location>
        <begin position="467"/>
        <end position="471"/>
    </location>
</feature>
<feature type="repeat" description="12" evidence="7">
    <location>
        <begin position="472"/>
        <end position="476"/>
    </location>
</feature>
<feature type="repeat" description="13" evidence="7">
    <location>
        <begin position="477"/>
        <end position="481"/>
    </location>
</feature>
<feature type="repeat" description="14" evidence="7">
    <location>
        <begin position="485"/>
        <end position="489"/>
    </location>
</feature>
<feature type="repeat" description="15" evidence="7">
    <location>
        <begin position="493"/>
        <end position="497"/>
    </location>
</feature>
<feature type="repeat" description="16" evidence="7">
    <location>
        <begin position="501"/>
        <end position="505"/>
    </location>
</feature>
<feature type="repeat" description="17" evidence="7">
    <location>
        <begin position="506"/>
        <end position="510"/>
    </location>
</feature>
<feature type="repeat" description="18" evidence="7">
    <location>
        <begin position="514"/>
        <end position="518"/>
    </location>
</feature>
<feature type="repeat" description="19" evidence="7">
    <location>
        <begin position="519"/>
        <end position="523"/>
    </location>
</feature>
<feature type="repeat" description="20" evidence="7">
    <location>
        <begin position="524"/>
        <end position="528"/>
    </location>
</feature>
<feature type="repeat" description="21" evidence="7">
    <location>
        <begin position="532"/>
        <end position="536"/>
    </location>
</feature>
<feature type="repeat" description="22" evidence="7">
    <location>
        <begin position="537"/>
        <end position="549"/>
    </location>
</feature>
<feature type="repeat" description="23" evidence="7">
    <location>
        <begin position="553"/>
        <end position="557"/>
    </location>
</feature>
<feature type="repeat" description="24" evidence="7">
    <location>
        <begin position="558"/>
        <end position="562"/>
    </location>
</feature>
<feature type="repeat" description="25" evidence="7">
    <location>
        <begin position="563"/>
        <end position="567"/>
    </location>
</feature>
<feature type="repeat" description="26" evidence="7">
    <location>
        <begin position="571"/>
        <end position="575"/>
    </location>
</feature>
<feature type="repeat" description="27" evidence="7">
    <location>
        <begin position="576"/>
        <end position="580"/>
    </location>
</feature>
<feature type="repeat" description="28" evidence="7">
    <location>
        <begin position="589"/>
        <end position="593"/>
    </location>
</feature>
<feature type="repeat" description="29" evidence="7">
    <location>
        <begin position="594"/>
        <end position="598"/>
    </location>
</feature>
<feature type="repeat" description="30" evidence="7">
    <location>
        <begin position="599"/>
        <end position="603"/>
    </location>
</feature>
<feature type="repeat" description="31" evidence="7">
    <location>
        <begin position="612"/>
        <end position="616"/>
    </location>
</feature>
<feature type="repeat" description="32" evidence="7">
    <location>
        <begin position="617"/>
        <end position="621"/>
    </location>
</feature>
<feature type="repeat" description="33" evidence="7">
    <location>
        <begin position="622"/>
        <end position="626"/>
    </location>
</feature>
<feature type="repeat" description="34" evidence="7">
    <location>
        <begin position="630"/>
        <end position="634"/>
    </location>
</feature>
<feature type="repeat" description="35" evidence="7">
    <location>
        <begin position="635"/>
        <end position="639"/>
    </location>
</feature>
<feature type="repeat" description="36" evidence="7">
    <location>
        <begin position="643"/>
        <end position="647"/>
    </location>
</feature>
<feature type="repeat" description="37" evidence="7">
    <location>
        <begin position="648"/>
        <end position="652"/>
    </location>
</feature>
<feature type="repeat" description="38" evidence="7">
    <location>
        <begin position="653"/>
        <end position="657"/>
    </location>
</feature>
<feature type="repeat" description="39" evidence="7">
    <location>
        <begin position="661"/>
        <end position="665"/>
    </location>
</feature>
<feature type="repeat" description="40" evidence="7">
    <location>
        <begin position="669"/>
        <end position="673"/>
    </location>
</feature>
<feature type="repeat" description="41" evidence="7">
    <location>
        <begin position="674"/>
        <end position="678"/>
    </location>
</feature>
<feature type="region of interest" description="41 X 5 AA approximate tandem repeats of [LVMGIE]-[PSM]-[EDKA]-[LIVMA]-[AQKHPRT]; that may have a tripeptide spacer of [ALKD]-[IPV]-[KPH]" evidence="7">
    <location>
        <begin position="402"/>
        <end position="678"/>
    </location>
</feature>
<feature type="region of interest" description="Disordered" evidence="5">
    <location>
        <begin position="1207"/>
        <end position="1349"/>
    </location>
</feature>
<feature type="short sequence motif" description="Nuclear export signal" evidence="3">
    <location>
        <begin position="70"/>
        <end position="84"/>
    </location>
</feature>
<feature type="compositionally biased region" description="Basic and acidic residues" evidence="5">
    <location>
        <begin position="1207"/>
        <end position="1218"/>
    </location>
</feature>
<feature type="compositionally biased region" description="Low complexity" evidence="5">
    <location>
        <begin position="1232"/>
        <end position="1242"/>
    </location>
</feature>
<feature type="modified residue" description="Phosphoserine" evidence="2">
    <location>
        <position position="7"/>
    </location>
</feature>
<feature type="modified residue" description="Phosphoserine" evidence="2">
    <location>
        <position position="133"/>
    </location>
</feature>
<feature type="modified residue" description="Phosphoserine" evidence="2">
    <location>
        <position position="794"/>
    </location>
</feature>
<feature type="modified residue" description="Phosphoserine" evidence="2">
    <location>
        <position position="974"/>
    </location>
</feature>
<feature type="modified residue" description="Phosphoserine" evidence="1">
    <location>
        <position position="1236"/>
    </location>
</feature>
<feature type="modified residue" description="Phosphoserine" evidence="1">
    <location>
        <position position="1240"/>
    </location>
</feature>
<feature type="modified residue" description="Phosphoserine" evidence="1">
    <location>
        <position position="1242"/>
    </location>
</feature>
<feature type="modified residue" description="Phosphoserine" evidence="2">
    <location>
        <position position="1289"/>
    </location>
</feature>
<feature type="modified residue" description="Phosphoserine" evidence="1">
    <location>
        <position position="1295"/>
    </location>
</feature>
<feature type="modified residue" description="Phosphoserine" evidence="1">
    <location>
        <position position="1327"/>
    </location>
</feature>
<sequence length="1349" mass="142695">MEARSRSAEELRRAELVEIIVETEAQTGVSGINVAGGGKEGIFVRDLREDSPAARSLSLQEGDQLLSARVFFENFKYEDALRLLQCAEPYKVSFCLKRTVPTGDLALRPGTVAGYEIKGPRAKVAKLNIQSLSPVKKKKMVMPGALGAPADLAPVDVEFSFPKFSRLRRGLKAEAVEGPVPAAPTRRRLQLPRLRVREVAEEAQVARLAAAAPPPRKAKAEAEVAAGPRFTAPQVELVGPRLPGAEVGVPQVPAPKREAAPAVEPAAVGIQVPQVELPSLPSLPALPTLPCLETREGAVAVTVPTLDVAAPTVGVDLALPGAEVEPREEVPEVALKMPRLSFPRFGARAKEAAEAKVKGPKLRMPTFGLSLLEPRPAVPEAPESKLKLPTIKIPSFGIGVSPPEVKVPKGPEVKPPKVPEVKLPKMPEPVLPEVRLPEVELPKVSEMKLPKVPEMAVPEVRLPEVQLPKVPEMKLPEVKLPKVPEMAVPEVHLPEVQLPKVPEMKLPEVKLPKVPEMAVPEVRLPEVQLPKVPEMKLPKVPEMKCPEMKLPKVPEMAVPEVRLPEVQLPKVPEVKLPEVKLPEVKLPKVPEMAVPEVHLPEVQLPKVSEMKVPDVKLPEVKLPEIKLPKVPEMVVPDVHLPQVHLPKVSEMRLPEVQAPKVPEVHLPKAPEVKLPKAPEAQLKAARVEEAEGMDFGFKMPKMTLPKLGRAESPSQGKPGEAGAEVSGKLVTLPCLQPEVGSEARVGVPRLTLPSVELDLPGALGLEGQAAAAEVGKGEQAEAAGVGEVAFRLPSVEIVTPQLPTLDEGQAEVTEAKVKLSSKFSLPKFGLSGPKVTKPEAEGAGRAAKLKVSKFAISLPRARVGTEVEAKGTEEAGLLPALDLSIPQLSLDSHLPTGKAEVAGADIKLKGPKFGLPKFGVRGRDTEAGELVPGAAELEGKSRGWDGKVKMPKLKMPSFGLARGKEADISGGQVSPGEKPESTAVQLKIPEVELVTLGAQEEGRVEEEAAGSRGRLAGLQVSPAKQVGTEAQDGGLRMPLGISLPQVELTGFREATPGQQAESSAPPAEGTAGYRVHVPQVTLALPGAQAVGGELLVGEGVFKMPSVTVPQLELDVGLSREVQDGEAATSEGGLKLKVPTLGARAGAGAEGPSDQSAGAERTFHLSLPDVELSPPAVGTHAEYQVAEGEGDAGHKLKVRLPRFGLARAKEGAEEGEKAKSPKLKLPHVGFSQSEAVSGEGSPSPEEEDVEGGGEGASGRRGRVRVRLPRVGLAAPSKASRGQEGKAAPKSPSGEKSPKFRFPRVSLSPKTRGGSGDQDEGGFRVRLPSVGFSETGPPGPTRMEGAQAAVI</sequence>
<reference key="1">
    <citation type="journal article" date="2009" name="Genome Biol.">
        <title>A whole-genome assembly of the domestic cow, Bos taurus.</title>
        <authorList>
            <person name="Zimin A.V."/>
            <person name="Delcher A.L."/>
            <person name="Florea L."/>
            <person name="Kelley D.R."/>
            <person name="Schatz M.C."/>
            <person name="Puiu D."/>
            <person name="Hanrahan F."/>
            <person name="Pertea G."/>
            <person name="Van Tassell C.P."/>
            <person name="Sonstegard T.S."/>
            <person name="Marcais G."/>
            <person name="Roberts M."/>
            <person name="Subramanian P."/>
            <person name="Yorke J.A."/>
            <person name="Salzberg S.L."/>
        </authorList>
    </citation>
    <scope>NUCLEOTIDE SEQUENCE [LARGE SCALE GENOMIC DNA]</scope>
    <source>
        <strain>Hereford</strain>
    </source>
</reference>
<reference key="2">
    <citation type="submission" date="2006-12" db="EMBL/GenBank/DDBJ databases">
        <title>Generation of normalized libraries and expressed sequence tags from bovine fetal brain.</title>
        <authorList>
            <person name="Lehnert K."/>
            <person name="Ford C."/>
            <person name="Reid S.J."/>
            <person name="Bohm E."/>
            <person name="Sutherland G.T."/>
            <person name="Verkerk G."/>
            <person name="Walden A."/>
            <person name="Ward H.E."/>
            <person name="Pearson J.F."/>
            <person name="Snell R.G."/>
        </authorList>
    </citation>
    <scope>NUCLEOTIDE SEQUENCE [LARGE SCALE MRNA] OF 1-127</scope>
    <source>
        <strain>Friesian</strain>
        <tissue>Fetal brain</tissue>
    </source>
</reference>
<reference key="3">
    <citation type="journal article" date="2003" name="J. Cell Sci.">
        <title>A novel cell-cell junction system: the cortex adhaerens mosaic of lens fiber cells.</title>
        <authorList>
            <person name="Straub B.K."/>
            <person name="Boda J."/>
            <person name="Kuhn C."/>
            <person name="Schnoelzer M."/>
            <person name="Korf U."/>
            <person name="Kempf T."/>
            <person name="Spring H."/>
            <person name="Hatzfeld M."/>
            <person name="Franke W.W."/>
        </authorList>
    </citation>
    <scope>SUBUNIT</scope>
    <scope>IDENTIFICATION IN A COMPLEX WITH EZR; AHNAK AND PPL</scope>
    <scope>SUBCELLULAR LOCATION</scope>
    <scope>TISSUE SPECIFICITY</scope>
    <scope>IDENTIFICATION BY MASS SPECTROMETRY</scope>
</reference>
<keyword id="KW-0965">Cell junction</keyword>
<keyword id="KW-1003">Cell membrane</keyword>
<keyword id="KW-0963">Cytoplasm</keyword>
<keyword id="KW-0472">Membrane</keyword>
<keyword id="KW-0539">Nucleus</keyword>
<keyword id="KW-0597">Phosphoprotein</keyword>
<keyword id="KW-1185">Reference proteome</keyword>
<keyword id="KW-0677">Repeat</keyword>
<evidence type="ECO:0000250" key="1">
    <source>
        <dbReference type="UniProtKB" id="O55103"/>
    </source>
</evidence>
<evidence type="ECO:0000250" key="2">
    <source>
        <dbReference type="UniProtKB" id="Q63425"/>
    </source>
</evidence>
<evidence type="ECO:0000250" key="3">
    <source>
        <dbReference type="UniProtKB" id="Q9BXM0"/>
    </source>
</evidence>
<evidence type="ECO:0000255" key="4">
    <source>
        <dbReference type="PROSITE-ProRule" id="PRU00143"/>
    </source>
</evidence>
<evidence type="ECO:0000256" key="5">
    <source>
        <dbReference type="SAM" id="MobiDB-lite"/>
    </source>
</evidence>
<evidence type="ECO:0000269" key="6">
    <source>
    </source>
</evidence>
<evidence type="ECO:0000305" key="7"/>
<evidence type="ECO:0000305" key="8">
    <source>
    </source>
</evidence>
<accession>E1BM58</accession>
<name>PRAX_BOVIN</name>